<accession>P9WQP7</accession>
<accession>L0T7C3</accession>
<accession>O53454</accession>
<accession>Q7D8U6</accession>
<proteinExistence type="evidence at protein level"/>
<comment type="function">
    <text evidence="2">3-beta-HSD is a bifunctional enzyme, that catalyzes the oxidation and isomerization of cholesterol, pregnenolone, and dehydroepiandrosterone (DHEA) into cholest-4-en-3-one, progesterone, and androsterone, respectively.</text>
</comment>
<comment type="catalytic activity">
    <reaction evidence="2">
        <text>a 3beta-hydroxy-Delta(5)-steroid + NAD(+) = a 3-oxo-Delta(5)-steroid + NADH + H(+)</text>
        <dbReference type="Rhea" id="RHEA:24076"/>
        <dbReference type="ChEBI" id="CHEBI:1722"/>
        <dbReference type="ChEBI" id="CHEBI:15378"/>
        <dbReference type="ChEBI" id="CHEBI:47907"/>
        <dbReference type="ChEBI" id="CHEBI:57540"/>
        <dbReference type="ChEBI" id="CHEBI:57945"/>
        <dbReference type="EC" id="1.1.1.145"/>
    </reaction>
</comment>
<comment type="catalytic activity">
    <reaction evidence="2">
        <text>cholesterol + NAD(+) = cholest-5-en-3-one + NADH + H(+)</text>
        <dbReference type="Rhea" id="RHEA:35459"/>
        <dbReference type="ChEBI" id="CHEBI:15378"/>
        <dbReference type="ChEBI" id="CHEBI:16113"/>
        <dbReference type="ChEBI" id="CHEBI:57540"/>
        <dbReference type="ChEBI" id="CHEBI:57945"/>
        <dbReference type="ChEBI" id="CHEBI:63906"/>
    </reaction>
    <physiologicalReaction direction="left-to-right" evidence="2">
        <dbReference type="Rhea" id="RHEA:35460"/>
    </physiologicalReaction>
</comment>
<comment type="catalytic activity">
    <reaction evidence="2">
        <text>pregnenolone + NAD(+) = pregn-5-ene-3,20-dione + NADH + H(+)</text>
        <dbReference type="Rhea" id="RHEA:43924"/>
        <dbReference type="ChEBI" id="CHEBI:15378"/>
        <dbReference type="ChEBI" id="CHEBI:16581"/>
        <dbReference type="ChEBI" id="CHEBI:57540"/>
        <dbReference type="ChEBI" id="CHEBI:57945"/>
        <dbReference type="ChEBI" id="CHEBI:63837"/>
    </reaction>
    <physiologicalReaction direction="left-to-right" evidence="2">
        <dbReference type="Rhea" id="RHEA:43925"/>
    </physiologicalReaction>
</comment>
<comment type="catalytic activity">
    <reaction evidence="2">
        <text>3beta-hydroxyandrost-5-en-17-one + NAD(+) = androst-5-ene-3,17-dione + NADH + H(+)</text>
        <dbReference type="Rhea" id="RHEA:43932"/>
        <dbReference type="ChEBI" id="CHEBI:15378"/>
        <dbReference type="ChEBI" id="CHEBI:28689"/>
        <dbReference type="ChEBI" id="CHEBI:57540"/>
        <dbReference type="ChEBI" id="CHEBI:57945"/>
        <dbReference type="ChEBI" id="CHEBI:83865"/>
        <dbReference type="EC" id="1.1.1.145"/>
    </reaction>
    <physiologicalReaction direction="left-to-right" evidence="2">
        <dbReference type="Rhea" id="RHEA:43933"/>
    </physiologicalReaction>
</comment>
<comment type="catalytic activity">
    <reaction evidence="2">
        <text>a 3-oxo-Delta(5)-steroid = a 3-oxo-Delta(4)-steroid</text>
        <dbReference type="Rhea" id="RHEA:14709"/>
        <dbReference type="ChEBI" id="CHEBI:47907"/>
        <dbReference type="ChEBI" id="CHEBI:47909"/>
        <dbReference type="EC" id="5.3.3.1"/>
    </reaction>
</comment>
<comment type="catalytic activity">
    <reaction evidence="2">
        <text>cholest-5-en-3-one = cholest-4-en-3-one</text>
        <dbReference type="Rhea" id="RHEA:32187"/>
        <dbReference type="ChEBI" id="CHEBI:16175"/>
        <dbReference type="ChEBI" id="CHEBI:63906"/>
        <dbReference type="EC" id="5.3.3.1"/>
    </reaction>
    <physiologicalReaction direction="left-to-right" evidence="2">
        <dbReference type="Rhea" id="RHEA:32188"/>
    </physiologicalReaction>
</comment>
<comment type="catalytic activity">
    <reaction evidence="2">
        <text>pregn-5-ene-3,20-dione = progesterone</text>
        <dbReference type="Rhea" id="RHEA:43928"/>
        <dbReference type="ChEBI" id="CHEBI:17026"/>
        <dbReference type="ChEBI" id="CHEBI:63837"/>
    </reaction>
    <physiologicalReaction direction="left-to-right" evidence="2">
        <dbReference type="Rhea" id="RHEA:43929"/>
    </physiologicalReaction>
</comment>
<comment type="catalytic activity">
    <reaction evidence="2">
        <text>androst-5-ene-3,17-dione = androst-4-ene-3,17-dione</text>
        <dbReference type="Rhea" id="RHEA:43936"/>
        <dbReference type="ChEBI" id="CHEBI:16422"/>
        <dbReference type="ChEBI" id="CHEBI:83865"/>
    </reaction>
    <physiologicalReaction direction="left-to-right" evidence="2">
        <dbReference type="Rhea" id="RHEA:43937"/>
    </physiologicalReaction>
</comment>
<comment type="activity regulation">
    <text evidence="2">Inhibited by EDTA, zinc, silver, copper, and activated by magnesium and calcium. A competitive inhibition is observed with NAD at concentrations higher than 5.6 mM, and with trilostane (3,17-dihydroxy-4,5-epoxyandrost-2-ene-2-carbonitrile).</text>
</comment>
<comment type="biophysicochemical properties">
    <phDependence>
        <text evidence="2">Optimum pH is between 8.5-9.5. No catalytic activity is detected below pH 7.5.</text>
    </phDependence>
</comment>
<comment type="pathway">
    <text>Lipid metabolism; steroid biosynthesis.</text>
</comment>
<comment type="subunit">
    <text evidence="4">Monomer.</text>
</comment>
<comment type="subcellular location">
    <subcellularLocation>
        <location evidence="2">Cytoplasm</location>
    </subcellularLocation>
</comment>
<comment type="disruption phenotype">
    <text evidence="2">Disruption reduces the cholesterol oxidation activity at least 90-fold.</text>
</comment>
<comment type="similarity">
    <text evidence="3">Belongs to the 3-beta-HSD family.</text>
</comment>
<feature type="chain" id="PRO_0000403957" description="3 beta-hydroxysteroid dehydrogenase/Delta 5--&gt;4-isomerase">
    <location>
        <begin position="1"/>
        <end position="370"/>
    </location>
</feature>
<feature type="active site" description="Proton acceptor" evidence="1">
    <location>
        <position position="158"/>
    </location>
</feature>
<feature type="binding site" evidence="1">
    <location>
        <position position="162"/>
    </location>
    <ligand>
        <name>NAD(+)</name>
        <dbReference type="ChEBI" id="CHEBI:57540"/>
    </ligand>
</feature>
<evidence type="ECO:0000250" key="1"/>
<evidence type="ECO:0000269" key="2">
    <source>
    </source>
</evidence>
<evidence type="ECO:0000305" key="3"/>
<evidence type="ECO:0000305" key="4">
    <source>
    </source>
</evidence>
<organism>
    <name type="scientific">Mycobacterium tuberculosis (strain ATCC 25618 / H37Rv)</name>
    <dbReference type="NCBI Taxonomy" id="83332"/>
    <lineage>
        <taxon>Bacteria</taxon>
        <taxon>Bacillati</taxon>
        <taxon>Actinomycetota</taxon>
        <taxon>Actinomycetes</taxon>
        <taxon>Mycobacteriales</taxon>
        <taxon>Mycobacteriaceae</taxon>
        <taxon>Mycobacterium</taxon>
        <taxon>Mycobacterium tuberculosis complex</taxon>
    </lineage>
</organism>
<name>3BHS_MYCTU</name>
<protein>
    <recommendedName>
        <fullName>3 beta-hydroxysteroid dehydrogenase/Delta 5--&gt;4-isomerase</fullName>
    </recommendedName>
    <alternativeName>
        <fullName>Cholesterol dehydrogenase</fullName>
    </alternativeName>
    <domain>
        <recommendedName>
            <fullName>3-beta-hydroxy-Delta(5)-steroid dehydrogenase</fullName>
            <shortName>3-beta-HSD</shortName>
            <shortName>3BHSD</shortName>
            <ecNumber evidence="2">1.1.1.145</ecNumber>
        </recommendedName>
        <alternativeName>
            <fullName>3-beta hydroxysterol dehydrogenase</fullName>
        </alternativeName>
        <alternativeName>
            <fullName>3-beta-hydroxy-5-ene steroid dehydrogenase</fullName>
        </alternativeName>
        <alternativeName>
            <fullName>Progesterone reductase</fullName>
        </alternativeName>
    </domain>
    <domain>
        <recommendedName>
            <fullName>Steroid Delta-isomerase</fullName>
            <ecNumber evidence="2">5.3.3.1</ecNumber>
        </recommendedName>
        <alternativeName>
            <fullName>Delta-5-3-ketosteroid isomerase</fullName>
        </alternativeName>
    </domain>
</protein>
<keyword id="KW-0963">Cytoplasm</keyword>
<keyword id="KW-0413">Isomerase</keyword>
<keyword id="KW-0442">Lipid degradation</keyword>
<keyword id="KW-0443">Lipid metabolism</keyword>
<keyword id="KW-0511">Multifunctional enzyme</keyword>
<keyword id="KW-0520">NAD</keyword>
<keyword id="KW-0560">Oxidoreductase</keyword>
<keyword id="KW-1185">Reference proteome</keyword>
<keyword id="KW-0753">Steroid metabolism</keyword>
<gene>
    <name type="ordered locus">Rv1106c</name>
</gene>
<dbReference type="EC" id="1.1.1.145" evidence="2"/>
<dbReference type="EC" id="5.3.3.1" evidence="2"/>
<dbReference type="EMBL" id="AL123456">
    <property type="protein sequence ID" value="CCP43859.1"/>
    <property type="molecule type" value="Genomic_DNA"/>
</dbReference>
<dbReference type="PIR" id="H70897">
    <property type="entry name" value="H70897"/>
</dbReference>
<dbReference type="RefSeq" id="NP_215622.1">
    <property type="nucleotide sequence ID" value="NC_000962.3"/>
</dbReference>
<dbReference type="RefSeq" id="WP_003405840.1">
    <property type="nucleotide sequence ID" value="NZ_NVQJ01000021.1"/>
</dbReference>
<dbReference type="SMR" id="P9WQP7"/>
<dbReference type="FunCoup" id="P9WQP7">
    <property type="interactions" value="247"/>
</dbReference>
<dbReference type="STRING" id="83332.Rv1106c"/>
<dbReference type="BindingDB" id="P9WQP7"/>
<dbReference type="ChEMBL" id="CHEMBL1744528"/>
<dbReference type="SwissLipids" id="SLP:000001012"/>
<dbReference type="PaxDb" id="83332-Rv1106c"/>
<dbReference type="DNASU" id="886004"/>
<dbReference type="GeneID" id="886004"/>
<dbReference type="KEGG" id="mtu:Rv1106c"/>
<dbReference type="KEGG" id="mtv:RVBD_1106c"/>
<dbReference type="TubercuList" id="Rv1106c"/>
<dbReference type="eggNOG" id="COG0451">
    <property type="taxonomic scope" value="Bacteria"/>
</dbReference>
<dbReference type="InParanoid" id="P9WQP7"/>
<dbReference type="OrthoDB" id="3174087at2"/>
<dbReference type="PhylomeDB" id="P9WQP7"/>
<dbReference type="BioCyc" id="MetaCyc:G185E-5271-MONOMER"/>
<dbReference type="BRENDA" id="1.1.1.145">
    <property type="organism ID" value="3445"/>
</dbReference>
<dbReference type="UniPathway" id="UPA00062"/>
<dbReference type="PRO" id="PR:P9WQP7"/>
<dbReference type="Proteomes" id="UP000001584">
    <property type="component" value="Chromosome"/>
</dbReference>
<dbReference type="GO" id="GO:0005829">
    <property type="term" value="C:cytosol"/>
    <property type="evidence" value="ECO:0000314"/>
    <property type="project" value="MTBBASE"/>
</dbReference>
<dbReference type="GO" id="GO:0005886">
    <property type="term" value="C:plasma membrane"/>
    <property type="evidence" value="ECO:0007005"/>
    <property type="project" value="MTBBASE"/>
</dbReference>
<dbReference type="GO" id="GO:0003854">
    <property type="term" value="F:3-beta-hydroxy-Delta5-steroid dehydrogenase (NAD+) activity"/>
    <property type="evidence" value="ECO:0000314"/>
    <property type="project" value="MTBBASE"/>
</dbReference>
<dbReference type="GO" id="GO:0102294">
    <property type="term" value="F:cholesterol dehydrogenase (NAD+) activity"/>
    <property type="evidence" value="ECO:0007669"/>
    <property type="project" value="RHEA"/>
</dbReference>
<dbReference type="GO" id="GO:0070403">
    <property type="term" value="F:NAD+ binding"/>
    <property type="evidence" value="ECO:0000314"/>
    <property type="project" value="MTBBASE"/>
</dbReference>
<dbReference type="GO" id="GO:0016616">
    <property type="term" value="F:oxidoreductase activity, acting on the CH-OH group of donors, NAD or NADP as acceptor"/>
    <property type="evidence" value="ECO:0000318"/>
    <property type="project" value="GO_Central"/>
</dbReference>
<dbReference type="GO" id="GO:0004769">
    <property type="term" value="F:steroid Delta-isomerase activity"/>
    <property type="evidence" value="ECO:0000314"/>
    <property type="project" value="MTBBASE"/>
</dbReference>
<dbReference type="GO" id="GO:0030283">
    <property type="term" value="F:testosterone dehydrogenase [NAD(P)+] activity"/>
    <property type="evidence" value="ECO:0000314"/>
    <property type="project" value="UniProtKB"/>
</dbReference>
<dbReference type="GO" id="GO:0016042">
    <property type="term" value="P:lipid catabolic process"/>
    <property type="evidence" value="ECO:0007669"/>
    <property type="project" value="UniProtKB-KW"/>
</dbReference>
<dbReference type="GO" id="GO:0006694">
    <property type="term" value="P:steroid biosynthetic process"/>
    <property type="evidence" value="ECO:0007669"/>
    <property type="project" value="UniProtKB-UniPathway"/>
</dbReference>
<dbReference type="GO" id="GO:0008202">
    <property type="term" value="P:steroid metabolic process"/>
    <property type="evidence" value="ECO:0000314"/>
    <property type="project" value="MTBBASE"/>
</dbReference>
<dbReference type="CDD" id="cd05241">
    <property type="entry name" value="3b-HSD-like_SDR_e"/>
    <property type="match status" value="1"/>
</dbReference>
<dbReference type="FunFam" id="3.40.50.720:FF:000686">
    <property type="entry name" value="3 beta-hydroxysteroid dehydrogenase/Delta 5--&gt;4-isomerase"/>
    <property type="match status" value="1"/>
</dbReference>
<dbReference type="Gene3D" id="3.40.50.720">
    <property type="entry name" value="NAD(P)-binding Rossmann-like Domain"/>
    <property type="match status" value="1"/>
</dbReference>
<dbReference type="InterPro" id="IPR002225">
    <property type="entry name" value="3Beta_OHSteriod_DH/Estase"/>
</dbReference>
<dbReference type="InterPro" id="IPR050177">
    <property type="entry name" value="Lipid_A_modif_metabolic_enz"/>
</dbReference>
<dbReference type="InterPro" id="IPR036291">
    <property type="entry name" value="NAD(P)-bd_dom_sf"/>
</dbReference>
<dbReference type="PANTHER" id="PTHR43245">
    <property type="entry name" value="BIFUNCTIONAL POLYMYXIN RESISTANCE PROTEIN ARNA"/>
    <property type="match status" value="1"/>
</dbReference>
<dbReference type="PANTHER" id="PTHR43245:SF51">
    <property type="entry name" value="SHORT CHAIN DEHYDROGENASE_REDUCTASE FAMILY 42E, MEMBER 2"/>
    <property type="match status" value="1"/>
</dbReference>
<dbReference type="Pfam" id="PF01073">
    <property type="entry name" value="3Beta_HSD"/>
    <property type="match status" value="1"/>
</dbReference>
<dbReference type="SUPFAM" id="SSF51735">
    <property type="entry name" value="NAD(P)-binding Rossmann-fold domains"/>
    <property type="match status" value="1"/>
</dbReference>
<reference key="1">
    <citation type="journal article" date="1998" name="Nature">
        <title>Deciphering the biology of Mycobacterium tuberculosis from the complete genome sequence.</title>
        <authorList>
            <person name="Cole S.T."/>
            <person name="Brosch R."/>
            <person name="Parkhill J."/>
            <person name="Garnier T."/>
            <person name="Churcher C.M."/>
            <person name="Harris D.E."/>
            <person name="Gordon S.V."/>
            <person name="Eiglmeier K."/>
            <person name="Gas S."/>
            <person name="Barry C.E. III"/>
            <person name="Tekaia F."/>
            <person name="Badcock K."/>
            <person name="Basham D."/>
            <person name="Brown D."/>
            <person name="Chillingworth T."/>
            <person name="Connor R."/>
            <person name="Davies R.M."/>
            <person name="Devlin K."/>
            <person name="Feltwell T."/>
            <person name="Gentles S."/>
            <person name="Hamlin N."/>
            <person name="Holroyd S."/>
            <person name="Hornsby T."/>
            <person name="Jagels K."/>
            <person name="Krogh A."/>
            <person name="McLean J."/>
            <person name="Moule S."/>
            <person name="Murphy L.D."/>
            <person name="Oliver S."/>
            <person name="Osborne J."/>
            <person name="Quail M.A."/>
            <person name="Rajandream M.A."/>
            <person name="Rogers J."/>
            <person name="Rutter S."/>
            <person name="Seeger K."/>
            <person name="Skelton S."/>
            <person name="Squares S."/>
            <person name="Squares R."/>
            <person name="Sulston J.E."/>
            <person name="Taylor K."/>
            <person name="Whitehead S."/>
            <person name="Barrell B.G."/>
        </authorList>
    </citation>
    <scope>NUCLEOTIDE SEQUENCE [LARGE SCALE GENOMIC DNA]</scope>
    <source>
        <strain>ATCC 25618 / H37Rv</strain>
    </source>
</reference>
<reference key="2">
    <citation type="journal article" date="2007" name="Biochemistry">
        <title>Rv1106c from Mycobacterium tuberculosis is a 3beta-hydroxysteroid dehydrogenase.</title>
        <authorList>
            <person name="Yang X."/>
            <person name="Dubnau E."/>
            <person name="Smith I."/>
            <person name="Sampson N.S."/>
        </authorList>
    </citation>
    <scope>FUNCTION AS A 3BETA-HYDROXYSTEROL DEHYDROGENASE AND ISOMERASE</scope>
    <scope>CATALYTIC ACTIVITY</scope>
    <scope>BIOPHYSICOCHEMICAL PROPERTIES</scope>
    <scope>ACTIVITY REGULATION</scope>
    <scope>DISRUPTION PHENOTYPE</scope>
    <scope>SUBCELLULAR LOCATION</scope>
    <scope>SUBUNIT</scope>
</reference>
<reference key="3">
    <citation type="journal article" date="2011" name="Mol. Cell. Proteomics">
        <title>Proteogenomic analysis of Mycobacterium tuberculosis by high resolution mass spectrometry.</title>
        <authorList>
            <person name="Kelkar D.S."/>
            <person name="Kumar D."/>
            <person name="Kumar P."/>
            <person name="Balakrishnan L."/>
            <person name="Muthusamy B."/>
            <person name="Yadav A.K."/>
            <person name="Shrivastava P."/>
            <person name="Marimuthu A."/>
            <person name="Anand S."/>
            <person name="Sundaram H."/>
            <person name="Kingsbury R."/>
            <person name="Harsha H.C."/>
            <person name="Nair B."/>
            <person name="Prasad T.S."/>
            <person name="Chauhan D.S."/>
            <person name="Katoch K."/>
            <person name="Katoch V.M."/>
            <person name="Kumar P."/>
            <person name="Chaerkady R."/>
            <person name="Ramachandran S."/>
            <person name="Dash D."/>
            <person name="Pandey A."/>
        </authorList>
    </citation>
    <scope>IDENTIFICATION BY MASS SPECTROMETRY [LARGE SCALE ANALYSIS]</scope>
    <source>
        <strain>ATCC 25618 / H37Rv</strain>
    </source>
</reference>
<sequence>MLRRMGDASLTTELGRVLVTGGAGFVGANLVTTLLDRGHWVRSFDRAPSLLPAHPQLEVLQGDITDADVCAAAVDGIDTIFHTAAIIELMGGASVTDEYRQRSFAVNVGGTENLLHAGQRAGVQRFVYTSSNSVVMGGQNIAGGDETLPYTDRFNDLYTETKVVAERFVLAQNGVDGMLTCAIRPSGIWGNGDQTMFRKLFESVLKGHVKVLVGRKSARLDNSYVHNLIHGFILAAAHLVPDGTAPGQAYFINDAEPINMFEFARPVLEACGQRWPKMRISGPAVRWVMTGWQRLHFRFGFPAPLLEPLAVERLYLDNYFSIAKARRDLGYEPLFTTQQALTECLPYYVSLFEQMKNEARAEKTAATVKP</sequence>